<reference key="1">
    <citation type="journal article" date="2000" name="DNA Res.">
        <title>Structural analysis of Arabidopsis thaliana chromosome 3. II. Sequence features of the 4,251,695 bp regions covered by 90 P1, TAC and BAC clones.</title>
        <authorList>
            <person name="Kaneko T."/>
            <person name="Katoh T."/>
            <person name="Sato S."/>
            <person name="Nakamura Y."/>
            <person name="Asamizu E."/>
            <person name="Tabata S."/>
        </authorList>
    </citation>
    <scope>NUCLEOTIDE SEQUENCE [LARGE SCALE GENOMIC DNA]</scope>
    <source>
        <strain>cv. Columbia</strain>
    </source>
</reference>
<reference key="2">
    <citation type="journal article" date="2017" name="Plant J.">
        <title>Araport11: a complete reannotation of the Arabidopsis thaliana reference genome.</title>
        <authorList>
            <person name="Cheng C.Y."/>
            <person name="Krishnakumar V."/>
            <person name="Chan A.P."/>
            <person name="Thibaud-Nissen F."/>
            <person name="Schobel S."/>
            <person name="Town C.D."/>
        </authorList>
    </citation>
    <scope>GENOME REANNOTATION</scope>
    <source>
        <strain>cv. Columbia</strain>
    </source>
</reference>
<reference key="3">
    <citation type="journal article" date="2005" name="Plant Physiol.">
        <title>Genome organization of more than 300 defensin-like genes in Arabidopsis.</title>
        <authorList>
            <person name="Silverstein K.A.T."/>
            <person name="Graham M.A."/>
            <person name="Paape T.D."/>
            <person name="VandenBosch K.A."/>
        </authorList>
    </citation>
    <scope>GENE FAMILY</scope>
</reference>
<feature type="chain" id="PRO_0000379759" description="Defensin-like protein 302">
    <location>
        <begin position="1"/>
        <end position="57"/>
    </location>
</feature>
<feature type="disulfide bond" evidence="1">
    <location>
        <begin position="19"/>
        <end position="39"/>
    </location>
</feature>
<feature type="disulfide bond" evidence="1">
    <location>
        <begin position="26"/>
        <end position="44"/>
    </location>
</feature>
<feature type="disulfide bond" evidence="1">
    <location>
        <begin position="32"/>
        <end position="46"/>
    </location>
</feature>
<name>DF302_ARATH</name>
<dbReference type="EMBL" id="AP000603">
    <property type="status" value="NOT_ANNOTATED_CDS"/>
    <property type="molecule type" value="Genomic_DNA"/>
</dbReference>
<dbReference type="EMBL" id="CP002686">
    <property type="protein sequence ID" value="AEE75344.1"/>
    <property type="molecule type" value="Genomic_DNA"/>
</dbReference>
<dbReference type="RefSeq" id="NP_001030686.1">
    <property type="nucleotide sequence ID" value="NM_001035609.1"/>
</dbReference>
<dbReference type="PaxDb" id="3702-AT3G13403.1"/>
<dbReference type="EnsemblPlants" id="AT3G13403.1">
    <property type="protein sequence ID" value="AT3G13403.1"/>
    <property type="gene ID" value="AT3G13403"/>
</dbReference>
<dbReference type="GeneID" id="3768875"/>
<dbReference type="Gramene" id="AT3G13403.1">
    <property type="protein sequence ID" value="AT3G13403.1"/>
    <property type="gene ID" value="AT3G13403"/>
</dbReference>
<dbReference type="KEGG" id="ath:AT3G13403"/>
<dbReference type="Araport" id="AT3G13403"/>
<dbReference type="TAIR" id="AT3G13403"/>
<dbReference type="HOGENOM" id="CLU_2999216_0_0_1"/>
<dbReference type="InParanoid" id="Q2V3W5"/>
<dbReference type="OrthoDB" id="10273301at2759"/>
<dbReference type="Proteomes" id="UP000006548">
    <property type="component" value="Chromosome 3"/>
</dbReference>
<dbReference type="ExpressionAtlas" id="Q2V3W5">
    <property type="expression patterns" value="baseline and differential"/>
</dbReference>
<dbReference type="GO" id="GO:0050832">
    <property type="term" value="P:defense response to fungus"/>
    <property type="evidence" value="ECO:0007669"/>
    <property type="project" value="UniProtKB-KW"/>
</dbReference>
<dbReference type="GO" id="GO:0031640">
    <property type="term" value="P:killing of cells of another organism"/>
    <property type="evidence" value="ECO:0007669"/>
    <property type="project" value="UniProtKB-KW"/>
</dbReference>
<gene>
    <name type="ordered locus">At3g13403</name>
    <name type="ORF">MRP15</name>
</gene>
<comment type="similarity">
    <text evidence="2">Belongs to the DEFL family.</text>
</comment>
<comment type="caution">
    <text evidence="2">Could be the product of a pseudogene. Lacks the signal peptide and 1 of the 4 disulfide bonds, which are conserved features of the family.</text>
</comment>
<sequence>MLRFVLVYIPVSVVSHTLCISLFIICSTRHTCFSKRYTCLLNICFCFFISSRIRNYF</sequence>
<keyword id="KW-0929">Antimicrobial</keyword>
<keyword id="KW-1015">Disulfide bond</keyword>
<keyword id="KW-0295">Fungicide</keyword>
<keyword id="KW-0611">Plant defense</keyword>
<keyword id="KW-1185">Reference proteome</keyword>
<accession>Q2V3W5</accession>
<proteinExistence type="uncertain"/>
<evidence type="ECO:0000250" key="1"/>
<evidence type="ECO:0000305" key="2"/>
<protein>
    <recommendedName>
        <fullName>Defensin-like protein 302</fullName>
    </recommendedName>
</protein>
<organism>
    <name type="scientific">Arabidopsis thaliana</name>
    <name type="common">Mouse-ear cress</name>
    <dbReference type="NCBI Taxonomy" id="3702"/>
    <lineage>
        <taxon>Eukaryota</taxon>
        <taxon>Viridiplantae</taxon>
        <taxon>Streptophyta</taxon>
        <taxon>Embryophyta</taxon>
        <taxon>Tracheophyta</taxon>
        <taxon>Spermatophyta</taxon>
        <taxon>Magnoliopsida</taxon>
        <taxon>eudicotyledons</taxon>
        <taxon>Gunneridae</taxon>
        <taxon>Pentapetalae</taxon>
        <taxon>rosids</taxon>
        <taxon>malvids</taxon>
        <taxon>Brassicales</taxon>
        <taxon>Brassicaceae</taxon>
        <taxon>Camelineae</taxon>
        <taxon>Arabidopsis</taxon>
    </lineage>
</organism>